<name>SYFA_CHLCV</name>
<accession>Q822B5</accession>
<comment type="catalytic activity">
    <reaction evidence="1">
        <text>tRNA(Phe) + L-phenylalanine + ATP = L-phenylalanyl-tRNA(Phe) + AMP + diphosphate + H(+)</text>
        <dbReference type="Rhea" id="RHEA:19413"/>
        <dbReference type="Rhea" id="RHEA-COMP:9668"/>
        <dbReference type="Rhea" id="RHEA-COMP:9699"/>
        <dbReference type="ChEBI" id="CHEBI:15378"/>
        <dbReference type="ChEBI" id="CHEBI:30616"/>
        <dbReference type="ChEBI" id="CHEBI:33019"/>
        <dbReference type="ChEBI" id="CHEBI:58095"/>
        <dbReference type="ChEBI" id="CHEBI:78442"/>
        <dbReference type="ChEBI" id="CHEBI:78531"/>
        <dbReference type="ChEBI" id="CHEBI:456215"/>
        <dbReference type="EC" id="6.1.1.20"/>
    </reaction>
</comment>
<comment type="cofactor">
    <cofactor evidence="1">
        <name>Mg(2+)</name>
        <dbReference type="ChEBI" id="CHEBI:18420"/>
    </cofactor>
    <text evidence="1">Binds 2 magnesium ions per tetramer.</text>
</comment>
<comment type="subunit">
    <text evidence="1">Tetramer of two alpha and two beta subunits.</text>
</comment>
<comment type="subcellular location">
    <subcellularLocation>
        <location evidence="1">Cytoplasm</location>
    </subcellularLocation>
</comment>
<comment type="similarity">
    <text evidence="1">Belongs to the class-II aminoacyl-tRNA synthetase family. Phe-tRNA synthetase alpha subunit type 1 subfamily.</text>
</comment>
<gene>
    <name evidence="1" type="primary">pheS</name>
    <name type="ordered locus">CCA_00768</name>
</gene>
<keyword id="KW-0030">Aminoacyl-tRNA synthetase</keyword>
<keyword id="KW-0067">ATP-binding</keyword>
<keyword id="KW-0963">Cytoplasm</keyword>
<keyword id="KW-0436">Ligase</keyword>
<keyword id="KW-0460">Magnesium</keyword>
<keyword id="KW-0479">Metal-binding</keyword>
<keyword id="KW-0547">Nucleotide-binding</keyword>
<keyword id="KW-0648">Protein biosynthesis</keyword>
<evidence type="ECO:0000255" key="1">
    <source>
        <dbReference type="HAMAP-Rule" id="MF_00281"/>
    </source>
</evidence>
<organism>
    <name type="scientific">Chlamydia caviae (strain ATCC VR-813 / DSM 19441 / 03DC25 / GPIC)</name>
    <name type="common">Chlamydophila caviae</name>
    <dbReference type="NCBI Taxonomy" id="227941"/>
    <lineage>
        <taxon>Bacteria</taxon>
        <taxon>Pseudomonadati</taxon>
        <taxon>Chlamydiota</taxon>
        <taxon>Chlamydiia</taxon>
        <taxon>Chlamydiales</taxon>
        <taxon>Chlamydiaceae</taxon>
        <taxon>Chlamydia/Chlamydophila group</taxon>
        <taxon>Chlamydia</taxon>
    </lineage>
</organism>
<dbReference type="EC" id="6.1.1.20" evidence="1"/>
<dbReference type="EMBL" id="AE015925">
    <property type="protein sequence ID" value="AAP05509.1"/>
    <property type="molecule type" value="Genomic_DNA"/>
</dbReference>
<dbReference type="RefSeq" id="WP_011006723.1">
    <property type="nucleotide sequence ID" value="NC_003361.3"/>
</dbReference>
<dbReference type="SMR" id="Q822B5"/>
<dbReference type="STRING" id="227941.CCA_00768"/>
<dbReference type="KEGG" id="cca:CCA_00768"/>
<dbReference type="eggNOG" id="COG0016">
    <property type="taxonomic scope" value="Bacteria"/>
</dbReference>
<dbReference type="HOGENOM" id="CLU_025086_0_1_0"/>
<dbReference type="OrthoDB" id="9800719at2"/>
<dbReference type="Proteomes" id="UP000002193">
    <property type="component" value="Chromosome"/>
</dbReference>
<dbReference type="GO" id="GO:0005737">
    <property type="term" value="C:cytoplasm"/>
    <property type="evidence" value="ECO:0007669"/>
    <property type="project" value="UniProtKB-SubCell"/>
</dbReference>
<dbReference type="GO" id="GO:0005524">
    <property type="term" value="F:ATP binding"/>
    <property type="evidence" value="ECO:0007669"/>
    <property type="project" value="UniProtKB-UniRule"/>
</dbReference>
<dbReference type="GO" id="GO:0000287">
    <property type="term" value="F:magnesium ion binding"/>
    <property type="evidence" value="ECO:0007669"/>
    <property type="project" value="UniProtKB-UniRule"/>
</dbReference>
<dbReference type="GO" id="GO:0004826">
    <property type="term" value="F:phenylalanine-tRNA ligase activity"/>
    <property type="evidence" value="ECO:0007669"/>
    <property type="project" value="UniProtKB-UniRule"/>
</dbReference>
<dbReference type="GO" id="GO:0000049">
    <property type="term" value="F:tRNA binding"/>
    <property type="evidence" value="ECO:0007669"/>
    <property type="project" value="InterPro"/>
</dbReference>
<dbReference type="GO" id="GO:0006432">
    <property type="term" value="P:phenylalanyl-tRNA aminoacylation"/>
    <property type="evidence" value="ECO:0007669"/>
    <property type="project" value="UniProtKB-UniRule"/>
</dbReference>
<dbReference type="CDD" id="cd00496">
    <property type="entry name" value="PheRS_alpha_core"/>
    <property type="match status" value="1"/>
</dbReference>
<dbReference type="Gene3D" id="3.30.930.10">
    <property type="entry name" value="Bira Bifunctional Protein, Domain 2"/>
    <property type="match status" value="1"/>
</dbReference>
<dbReference type="HAMAP" id="MF_00281">
    <property type="entry name" value="Phe_tRNA_synth_alpha1"/>
    <property type="match status" value="1"/>
</dbReference>
<dbReference type="InterPro" id="IPR006195">
    <property type="entry name" value="aa-tRNA-synth_II"/>
</dbReference>
<dbReference type="InterPro" id="IPR045864">
    <property type="entry name" value="aa-tRNA-synth_II/BPL/LPL"/>
</dbReference>
<dbReference type="InterPro" id="IPR004529">
    <property type="entry name" value="Phe-tRNA-synth_IIc_asu"/>
</dbReference>
<dbReference type="InterPro" id="IPR004188">
    <property type="entry name" value="Phe-tRNA_ligase_II_N"/>
</dbReference>
<dbReference type="InterPro" id="IPR022911">
    <property type="entry name" value="Phe_tRNA_ligase_alpha1_bac"/>
</dbReference>
<dbReference type="InterPro" id="IPR002319">
    <property type="entry name" value="Phenylalanyl-tRNA_Synthase"/>
</dbReference>
<dbReference type="InterPro" id="IPR010978">
    <property type="entry name" value="tRNA-bd_arm"/>
</dbReference>
<dbReference type="NCBIfam" id="TIGR00468">
    <property type="entry name" value="pheS"/>
    <property type="match status" value="1"/>
</dbReference>
<dbReference type="PANTHER" id="PTHR11538:SF41">
    <property type="entry name" value="PHENYLALANINE--TRNA LIGASE, MITOCHONDRIAL"/>
    <property type="match status" value="1"/>
</dbReference>
<dbReference type="PANTHER" id="PTHR11538">
    <property type="entry name" value="PHENYLALANYL-TRNA SYNTHETASE"/>
    <property type="match status" value="1"/>
</dbReference>
<dbReference type="Pfam" id="PF02912">
    <property type="entry name" value="Phe_tRNA-synt_N"/>
    <property type="match status" value="1"/>
</dbReference>
<dbReference type="Pfam" id="PF01409">
    <property type="entry name" value="tRNA-synt_2d"/>
    <property type="match status" value="1"/>
</dbReference>
<dbReference type="SUPFAM" id="SSF55681">
    <property type="entry name" value="Class II aaRS and biotin synthetases"/>
    <property type="match status" value="1"/>
</dbReference>
<dbReference type="SUPFAM" id="SSF46589">
    <property type="entry name" value="tRNA-binding arm"/>
    <property type="match status" value="1"/>
</dbReference>
<dbReference type="PROSITE" id="PS50862">
    <property type="entry name" value="AA_TRNA_LIGASE_II"/>
    <property type="match status" value="1"/>
</dbReference>
<sequence length="341" mass="38897">MMIQEELEATKQQFCIELDQVHSSKDLFDLKVRYLGKKGLFRCFADKLRECPSDQKALMGASINACKTYIEDLIRDKNNAILLAEESAEFLKEKIDITLPGEPQCPGGKHIVKKVLDDVVDIFVHLGFCVREAPNIESEENNFSLLNFEENHPARQMHDTFYLDAKTVLRTHTSNVQVRELSRGEPPIKVVAPGLCFRNEDISARSHVIFHQVEAFYVDRNVTLSDLTEMLTEFYHTFFERKIELRLRHSYFPFVEPGIEVDVSCECQAAGCSLCKHTGWLEVAGAGMIHPQVLRNSGVDPETYTGYAVGMGIERLAMLKHGISDIRLFCENDLRFLQQFS</sequence>
<protein>
    <recommendedName>
        <fullName evidence="1">Phenylalanine--tRNA ligase alpha subunit</fullName>
        <ecNumber evidence="1">6.1.1.20</ecNumber>
    </recommendedName>
    <alternativeName>
        <fullName evidence="1">Phenylalanyl-tRNA synthetase alpha subunit</fullName>
        <shortName evidence="1">PheRS</shortName>
    </alternativeName>
</protein>
<feature type="chain" id="PRO_0000126685" description="Phenylalanine--tRNA ligase alpha subunit">
    <location>
        <begin position="1"/>
        <end position="341"/>
    </location>
</feature>
<feature type="binding site" evidence="1">
    <location>
        <position position="256"/>
    </location>
    <ligand>
        <name>Mg(2+)</name>
        <dbReference type="ChEBI" id="CHEBI:18420"/>
        <note>shared with beta subunit</note>
    </ligand>
</feature>
<proteinExistence type="inferred from homology"/>
<reference key="1">
    <citation type="journal article" date="2003" name="Nucleic Acids Res.">
        <title>Genome sequence of Chlamydophila caviae (Chlamydia psittaci GPIC): examining the role of niche-specific genes in the evolution of the Chlamydiaceae.</title>
        <authorList>
            <person name="Read T.D."/>
            <person name="Myers G.S.A."/>
            <person name="Brunham R.C."/>
            <person name="Nelson W.C."/>
            <person name="Paulsen I.T."/>
            <person name="Heidelberg J.F."/>
            <person name="Holtzapple E.K."/>
            <person name="Khouri H.M."/>
            <person name="Federova N.B."/>
            <person name="Carty H.A."/>
            <person name="Umayam L.A."/>
            <person name="Haft D.H."/>
            <person name="Peterson J.D."/>
            <person name="Beanan M.J."/>
            <person name="White O."/>
            <person name="Salzberg S.L."/>
            <person name="Hsia R.-C."/>
            <person name="McClarty G."/>
            <person name="Rank R.G."/>
            <person name="Bavoil P.M."/>
            <person name="Fraser C.M."/>
        </authorList>
    </citation>
    <scope>NUCLEOTIDE SEQUENCE [LARGE SCALE GENOMIC DNA]</scope>
    <source>
        <strain>ATCC VR-813 / DSM 19441 / 03DC25 / GPIC</strain>
    </source>
</reference>